<sequence length="699" mass="75904">MADRRRQRASQDTEDEESGASGSDSGSPARGGGSCSGSAGGGGSGSLPSQRGGRGGGLHLRRVESGGAKSAEESECESEDGMEGDAVLSDYESAEDSEGEEEYSEEENSKVELKSEANDAADSSAKEKGEEKPESKGTVTGERQSGDGQESTEPVENKVGKKGPKHLDDDEDRKNPAYIPRKGLFFEHDLRGQTQEEEVRPKGRQRKLWKDEGRWEHDKFREDEQAPKSRQELIALYGYDIRSAHNPDDIKPRRIRKPRFGSPPQRDPNWIGDRSSKSHRHQGPGGNLPPRTFINRNAAGTGRMSTSRNYSRSGGFKEGRTSFRPVEVGGQHGARSGETLKHEANYRSRRLEQTPMRDPSPEPDAPLLGSPEKEEVASETPAAVPDITPPAPDRPIEKKSYSRARRTRTKVGDAVKAAEEVPPPSEGLTSAATVPESTPPAAKTGNWEAPVDSTTGGLEQDVAQLNIAEQNWSPGQPSFLQPRELRGMPNHIHMGAGPPPQFNRMEEMGVQSGRAKRYSSQRQRPVPEPPAPPVHISIMEGHYYDPLQFQGPIYTHGDSPAPLPPQGMIVQPEMHLPHPGLHPHQSPAPLPNPGLYPPPVSMSPGQPPPQQLLAPTYFSAPGVMNFGNPSYPYAPGALPPPPPPHLYPNTQAPSQVYGGVTYYNPAQQQVQPKPSPPRRTPQPVSIKPPPSEVVSRGSS</sequence>
<dbReference type="EMBL" id="AF525467">
    <property type="protein sequence ID" value="AAM88386.1"/>
    <property type="molecule type" value="mRNA"/>
</dbReference>
<dbReference type="RefSeq" id="NP_671485.1">
    <property type="nucleotide sequence ID" value="NM_147144.1"/>
</dbReference>
<dbReference type="BioGRID" id="251708">
    <property type="interactions" value="1"/>
</dbReference>
<dbReference type="FunCoup" id="Q8K3X0">
    <property type="interactions" value="4493"/>
</dbReference>
<dbReference type="STRING" id="10116.ENSRNOP00000013204"/>
<dbReference type="iPTMnet" id="Q8K3X0"/>
<dbReference type="PhosphoSitePlus" id="Q8K3X0"/>
<dbReference type="jPOST" id="Q8K3X0"/>
<dbReference type="PaxDb" id="10116-ENSRNOP00000013204"/>
<dbReference type="GeneID" id="259170"/>
<dbReference type="KEGG" id="rno:259170"/>
<dbReference type="UCSC" id="RGD:628766">
    <property type="organism name" value="rat"/>
</dbReference>
<dbReference type="AGR" id="RGD:628766"/>
<dbReference type="CTD" id="22794"/>
<dbReference type="RGD" id="628766">
    <property type="gene designation" value="Casc3"/>
</dbReference>
<dbReference type="eggNOG" id="KOG4264">
    <property type="taxonomic scope" value="Eukaryota"/>
</dbReference>
<dbReference type="InParanoid" id="Q8K3X0"/>
<dbReference type="OrthoDB" id="83025at9989"/>
<dbReference type="PhylomeDB" id="Q8K3X0"/>
<dbReference type="Reactome" id="R-RNO-159236">
    <property type="pathway name" value="Transport of Mature mRNA derived from an Intron-Containing Transcript"/>
</dbReference>
<dbReference type="Reactome" id="R-RNO-72163">
    <property type="pathway name" value="mRNA Splicing - Major Pathway"/>
</dbReference>
<dbReference type="Reactome" id="R-RNO-72187">
    <property type="pathway name" value="mRNA 3'-end processing"/>
</dbReference>
<dbReference type="Reactome" id="R-RNO-73856">
    <property type="pathway name" value="RNA Polymerase II Transcription Termination"/>
</dbReference>
<dbReference type="Reactome" id="R-RNO-975957">
    <property type="pathway name" value="Nonsense Mediated Decay (NMD) enhanced by the Exon Junction Complex (EJC)"/>
</dbReference>
<dbReference type="PRO" id="PR:Q8K3X0"/>
<dbReference type="Proteomes" id="UP000002494">
    <property type="component" value="Unplaced"/>
</dbReference>
<dbReference type="GO" id="GO:0005737">
    <property type="term" value="C:cytoplasm"/>
    <property type="evidence" value="ECO:0000266"/>
    <property type="project" value="RGD"/>
</dbReference>
<dbReference type="GO" id="GO:0010494">
    <property type="term" value="C:cytoplasmic stress granule"/>
    <property type="evidence" value="ECO:0007669"/>
    <property type="project" value="UniProtKB-SubCell"/>
</dbReference>
<dbReference type="GO" id="GO:0030425">
    <property type="term" value="C:dendrite"/>
    <property type="evidence" value="ECO:0007669"/>
    <property type="project" value="UniProtKB-SubCell"/>
</dbReference>
<dbReference type="GO" id="GO:0035145">
    <property type="term" value="C:exon-exon junction complex"/>
    <property type="evidence" value="ECO:0000266"/>
    <property type="project" value="RGD"/>
</dbReference>
<dbReference type="GO" id="GO:0016607">
    <property type="term" value="C:nuclear speck"/>
    <property type="evidence" value="ECO:0007669"/>
    <property type="project" value="UniProtKB-SubCell"/>
</dbReference>
<dbReference type="GO" id="GO:0005634">
    <property type="term" value="C:nucleus"/>
    <property type="evidence" value="ECO:0000250"/>
    <property type="project" value="UniProtKB"/>
</dbReference>
<dbReference type="GO" id="GO:0048471">
    <property type="term" value="C:perinuclear region of cytoplasm"/>
    <property type="evidence" value="ECO:0007669"/>
    <property type="project" value="UniProtKB-SubCell"/>
</dbReference>
<dbReference type="GO" id="GO:1990904">
    <property type="term" value="C:ribonucleoprotein complex"/>
    <property type="evidence" value="ECO:0000266"/>
    <property type="project" value="RGD"/>
</dbReference>
<dbReference type="GO" id="GO:0071006">
    <property type="term" value="C:U2-type catalytic step 1 spliceosome"/>
    <property type="evidence" value="ECO:0000250"/>
    <property type="project" value="UniProtKB"/>
</dbReference>
<dbReference type="GO" id="GO:0019899">
    <property type="term" value="F:enzyme binding"/>
    <property type="evidence" value="ECO:0000266"/>
    <property type="project" value="RGD"/>
</dbReference>
<dbReference type="GO" id="GO:0042802">
    <property type="term" value="F:identical protein binding"/>
    <property type="evidence" value="ECO:0000266"/>
    <property type="project" value="RGD"/>
</dbReference>
<dbReference type="GO" id="GO:0003729">
    <property type="term" value="F:mRNA binding"/>
    <property type="evidence" value="ECO:0007669"/>
    <property type="project" value="InterPro"/>
</dbReference>
<dbReference type="GO" id="GO:0031625">
    <property type="term" value="F:ubiquitin protein ligase binding"/>
    <property type="evidence" value="ECO:0000266"/>
    <property type="project" value="RGD"/>
</dbReference>
<dbReference type="GO" id="GO:0008298">
    <property type="term" value="P:intracellular mRNA localization"/>
    <property type="evidence" value="ECO:0000266"/>
    <property type="project" value="RGD"/>
</dbReference>
<dbReference type="GO" id="GO:0000398">
    <property type="term" value="P:mRNA splicing, via spliceosome"/>
    <property type="evidence" value="ECO:0000250"/>
    <property type="project" value="UniProtKB"/>
</dbReference>
<dbReference type="GO" id="GO:0051028">
    <property type="term" value="P:mRNA transport"/>
    <property type="evidence" value="ECO:0007669"/>
    <property type="project" value="UniProtKB-KW"/>
</dbReference>
<dbReference type="GO" id="GO:0000184">
    <property type="term" value="P:nuclear-transcribed mRNA catabolic process, nonsense-mediated decay"/>
    <property type="evidence" value="ECO:0007669"/>
    <property type="project" value="UniProtKB-KW"/>
</dbReference>
<dbReference type="GO" id="GO:2000622">
    <property type="term" value="P:regulation of nuclear-transcribed mRNA catabolic process, nonsense-mediated decay"/>
    <property type="evidence" value="ECO:0000266"/>
    <property type="project" value="RGD"/>
</dbReference>
<dbReference type="GO" id="GO:0006417">
    <property type="term" value="P:regulation of translation"/>
    <property type="evidence" value="ECO:0007669"/>
    <property type="project" value="UniProtKB-KW"/>
</dbReference>
<dbReference type="InterPro" id="IPR018545">
    <property type="entry name" value="Btz_dom"/>
</dbReference>
<dbReference type="InterPro" id="IPR028544">
    <property type="entry name" value="CASC3"/>
</dbReference>
<dbReference type="PANTHER" id="PTHR13434">
    <property type="entry name" value="PROTEIN CASC3"/>
    <property type="match status" value="1"/>
</dbReference>
<dbReference type="PANTHER" id="PTHR13434:SF0">
    <property type="entry name" value="PROTEIN CASC3"/>
    <property type="match status" value="1"/>
</dbReference>
<dbReference type="Pfam" id="PF09405">
    <property type="entry name" value="Btz"/>
    <property type="match status" value="1"/>
</dbReference>
<dbReference type="SMART" id="SM01044">
    <property type="entry name" value="Btz"/>
    <property type="match status" value="1"/>
</dbReference>
<comment type="function">
    <text evidence="2 6">Required for pre-mRNA splicing as component of the spliceosome (By similarity). Core component of the splicing-dependent multiprotein exon junction complex (EJC) deposited at splice junctions on mRNAs. The EJC is a dynamic structure consisting of core proteins and several peripheral nuclear and cytoplasmic associated factors that join the complex only transiently either during EJC assembly or during subsequent mRNA metabolism. The EJC marks the position of the exon-exon junction in the mature mRNA for the gene expression machinery and the core components remain bound to spliced mRNAs throughout all stages of mRNA metabolism thereby influencing downstream processes including nuclear mRNA export, subcellular mRNA localization, translation efficiency and nonsense-mediated mRNA decay (NMD). Stimulates the ATPase and RNA-helicase activities of EIF4A3. Plays a role in the stress response by participating in cytoplasmic stress granules assembly and by favoring cell recovery following stress. Component of the dendritic ribonucleoprotein particles (RNPs) in hippocampal neurons. May play a role in mRNA transport. Binds spliced mRNA in sequence-independent manner, 20-24 nucleotides upstream of mRNA exon-exon junctions. Binds poly(G) and poly(U) RNA homomer (By similarity). Component of the dendritic ribonucleoprotein particles (RNPs) in hippocampal neurons. May play a role in mRNA transport.</text>
</comment>
<comment type="subunit">
    <text evidence="2 6">Identified in the spliceosome C complex (By similarity). Component of the mRNA splicing-dependent exon junction complex (EJC), which contains at least CASC3, EIF4A3, MAGOH, NXF1 and RBM8A/Y14. Identified in a complex composed of the EJC core, UPF3B and UPF2. The EJC core can also interact with UPF3A (in vitro) (By similarity). Forms homooligomers (PubMed:12843282). Interacts with STAU in an RNA-dependent manner (PubMed:12843282). Interacts with DHX34; the interaction is RNA-independent (By similarity).</text>
</comment>
<comment type="subcellular location">
    <subcellularLocation>
        <location evidence="6">Cytoplasm</location>
    </subcellularLocation>
    <subcellularLocation>
        <location evidence="6">Cytoplasm</location>
        <location evidence="6">Perinuclear region</location>
    </subcellularLocation>
    <subcellularLocation>
        <location evidence="3">Nucleus</location>
    </subcellularLocation>
    <subcellularLocation>
        <location evidence="2">Nucleus speckle</location>
    </subcellularLocation>
    <subcellularLocation>
        <location evidence="2">Cytoplasm</location>
        <location evidence="2">Stress granule</location>
    </subcellularLocation>
    <subcellularLocation>
        <location evidence="6">Cell projection</location>
        <location evidence="6">Dendrite</location>
    </subcellularLocation>
    <text evidence="2 3 9">Shuttles between the nucleus and the cytoplasm in a XPO1/CRM1-dependent manner (By similarity). Transported to the cytoplasm as part of the exon junction complex (EJC) bound to mRNA. In nuclear speckles, colocalizes with MAGOH. Under stress conditions, colocalizes with FMR1 and TIA1, but not MAGOH and RBM8A EJC core factors, in cytoplasmic stress granules (By similarity). In the dendrites of hippocampal neurons, localizes to dendritic ribonucleoprotein granules (Probable).</text>
</comment>
<comment type="tissue specificity">
    <text evidence="6">Expressed in the brain, including in the hippocampus (at protein level).</text>
</comment>
<comment type="domain">
    <text>The coiled coil domain may be involved in oligomerization.</text>
</comment>
<comment type="PTM">
    <text evidence="6">Phosphorylated.</text>
</comment>
<comment type="PTM">
    <text evidence="1">ADP-ribosylated by tankyrase TNKS and TNKS2. Poly-ADP-ribosylated protein is recognized by RNF146, followed by ubiquitination (By similarity).</text>
</comment>
<comment type="PTM">
    <text evidence="1">Ubiquitinated by RNF146 when poly-ADP-ribosylated, leading to its degradation.</text>
</comment>
<comment type="similarity">
    <text evidence="8">Belongs to the CASC3 family.</text>
</comment>
<protein>
    <recommendedName>
        <fullName>Protein CASC3</fullName>
    </recommendedName>
    <alternativeName>
        <fullName>Cancer susceptibility candidate gene 3 protein homolog</fullName>
    </alternativeName>
    <alternativeName>
        <fullName evidence="2">Metastatic lymph node gene 51 protein homolog</fullName>
    </alternativeName>
    <alternativeName>
        <fullName evidence="7">Protein barentsz</fullName>
        <shortName evidence="7">Btz</shortName>
    </alternativeName>
</protein>
<reference key="1">
    <citation type="journal article" date="2003" name="J. Neurosci.">
        <title>Barentsz, a new component of the Staufen-containing ribonucleoprotein particles in mammalian cells, interacts with Staufen in an RNA-dependent manner.</title>
        <authorList>
            <person name="Macchi P."/>
            <person name="Kroening S."/>
            <person name="Palacios I.M."/>
            <person name="Baldassa S."/>
            <person name="Grunewald B."/>
            <person name="Ambrosino C."/>
            <person name="Goetze B."/>
            <person name="Lupas A."/>
            <person name="St Johnston D."/>
            <person name="Kiebler M."/>
        </authorList>
    </citation>
    <scope>NUCLEOTIDE SEQUENCE [MRNA]</scope>
    <scope>FUNCTION</scope>
    <scope>HOMOOLIGOMERIZATION</scope>
    <scope>INTERACTION WITH STAU</scope>
    <scope>PHOSPHORYLATION</scope>
    <scope>SUBCELLULAR LOCATION</scope>
    <scope>TISSUE SPECIFICITY</scope>
    <source>
        <strain>Sprague-Dawley</strain>
    </source>
</reference>
<reference key="2">
    <citation type="journal article" date="2012" name="Nat. Commun.">
        <title>Quantitative maps of protein phosphorylation sites across 14 different rat organs and tissues.</title>
        <authorList>
            <person name="Lundby A."/>
            <person name="Secher A."/>
            <person name="Lage K."/>
            <person name="Nordsborg N.B."/>
            <person name="Dmytriyev A."/>
            <person name="Lundby C."/>
            <person name="Olsen J.V."/>
        </authorList>
    </citation>
    <scope>PHOSPHORYLATION [LARGE SCALE ANALYSIS] AT SER-145; SER-262; SER-360 AND SER-370</scope>
    <scope>IDENTIFICATION BY MASS SPECTROMETRY [LARGE SCALE ANALYSIS]</scope>
</reference>
<evidence type="ECO:0000250" key="1"/>
<evidence type="ECO:0000250" key="2">
    <source>
        <dbReference type="UniProtKB" id="O15234"/>
    </source>
</evidence>
<evidence type="ECO:0000250" key="3">
    <source>
        <dbReference type="UniProtKB" id="Q8K3W3"/>
    </source>
</evidence>
<evidence type="ECO:0000255" key="4"/>
<evidence type="ECO:0000256" key="5">
    <source>
        <dbReference type="SAM" id="MobiDB-lite"/>
    </source>
</evidence>
<evidence type="ECO:0000269" key="6">
    <source>
    </source>
</evidence>
<evidence type="ECO:0000303" key="7">
    <source>
    </source>
</evidence>
<evidence type="ECO:0000305" key="8"/>
<evidence type="ECO:0000305" key="9">
    <source>
    </source>
</evidence>
<evidence type="ECO:0007744" key="10">
    <source>
    </source>
</evidence>
<name>CASC3_RAT</name>
<gene>
    <name type="primary">Casc3</name>
    <name evidence="2" type="synonym">Mln51</name>
</gene>
<keyword id="KW-0013">ADP-ribosylation</keyword>
<keyword id="KW-0966">Cell projection</keyword>
<keyword id="KW-0175">Coiled coil</keyword>
<keyword id="KW-0963">Cytoplasm</keyword>
<keyword id="KW-0507">mRNA processing</keyword>
<keyword id="KW-0508">mRNA splicing</keyword>
<keyword id="KW-0509">mRNA transport</keyword>
<keyword id="KW-0866">Nonsense-mediated mRNA decay</keyword>
<keyword id="KW-0539">Nucleus</keyword>
<keyword id="KW-0597">Phosphoprotein</keyword>
<keyword id="KW-1185">Reference proteome</keyword>
<keyword id="KW-0694">RNA-binding</keyword>
<keyword id="KW-0747">Spliceosome</keyword>
<keyword id="KW-0346">Stress response</keyword>
<keyword id="KW-0810">Translation regulation</keyword>
<keyword id="KW-0813">Transport</keyword>
<keyword id="KW-0832">Ubl conjugation</keyword>
<organism>
    <name type="scientific">Rattus norvegicus</name>
    <name type="common">Rat</name>
    <dbReference type="NCBI Taxonomy" id="10116"/>
    <lineage>
        <taxon>Eukaryota</taxon>
        <taxon>Metazoa</taxon>
        <taxon>Chordata</taxon>
        <taxon>Craniata</taxon>
        <taxon>Vertebrata</taxon>
        <taxon>Euteleostomi</taxon>
        <taxon>Mammalia</taxon>
        <taxon>Eutheria</taxon>
        <taxon>Euarchontoglires</taxon>
        <taxon>Glires</taxon>
        <taxon>Rodentia</taxon>
        <taxon>Myomorpha</taxon>
        <taxon>Muroidea</taxon>
        <taxon>Muridae</taxon>
        <taxon>Murinae</taxon>
        <taxon>Rattus</taxon>
    </lineage>
</organism>
<feature type="chain" id="PRO_0000089326" description="Protein CASC3">
    <location>
        <begin position="1"/>
        <end position="699"/>
    </location>
</feature>
<feature type="region of interest" description="Disordered" evidence="5">
    <location>
        <begin position="1"/>
        <end position="455"/>
    </location>
</feature>
<feature type="region of interest" description="Necessary for RNA-binding, interaction with MAGOH and localization in nucleus speckles" evidence="1">
    <location>
        <begin position="134"/>
        <end position="280"/>
    </location>
</feature>
<feature type="region of interest" description="Sufficient to form the EJC" evidence="1">
    <location>
        <begin position="134"/>
        <end position="280"/>
    </location>
</feature>
<feature type="region of interest" description="Necessary for localization in cytoplasmic stress granules" evidence="1">
    <location>
        <begin position="374"/>
        <end position="699"/>
    </location>
</feature>
<feature type="region of interest" description="Disordered" evidence="5">
    <location>
        <begin position="577"/>
        <end position="596"/>
    </location>
</feature>
<feature type="region of interest" description="Disordered" evidence="5">
    <location>
        <begin position="629"/>
        <end position="699"/>
    </location>
</feature>
<feature type="coiled-coil region" evidence="4">
    <location>
        <begin position="93"/>
        <end position="128"/>
    </location>
</feature>
<feature type="short sequence motif" description="Nuclear localization signal 1" evidence="4">
    <location>
        <begin position="201"/>
        <end position="207"/>
    </location>
</feature>
<feature type="short sequence motif" description="Nuclear localization signal 2" evidence="4">
    <location>
        <begin position="251"/>
        <end position="259"/>
    </location>
</feature>
<feature type="short sequence motif" description="Nuclear export signal">
    <location>
        <begin position="458"/>
        <end position="467"/>
    </location>
</feature>
<feature type="compositionally biased region" description="Low complexity" evidence="5">
    <location>
        <begin position="19"/>
        <end position="28"/>
    </location>
</feature>
<feature type="compositionally biased region" description="Gly residues" evidence="5">
    <location>
        <begin position="29"/>
        <end position="45"/>
    </location>
</feature>
<feature type="compositionally biased region" description="Acidic residues" evidence="5">
    <location>
        <begin position="73"/>
        <end position="83"/>
    </location>
</feature>
<feature type="compositionally biased region" description="Acidic residues" evidence="5">
    <location>
        <begin position="92"/>
        <end position="106"/>
    </location>
</feature>
<feature type="compositionally biased region" description="Basic and acidic residues" evidence="5">
    <location>
        <begin position="107"/>
        <end position="117"/>
    </location>
</feature>
<feature type="compositionally biased region" description="Basic and acidic residues" evidence="5">
    <location>
        <begin position="124"/>
        <end position="135"/>
    </location>
</feature>
<feature type="compositionally biased region" description="Polar residues" evidence="5">
    <location>
        <begin position="137"/>
        <end position="154"/>
    </location>
</feature>
<feature type="compositionally biased region" description="Basic and acidic residues" evidence="5">
    <location>
        <begin position="155"/>
        <end position="175"/>
    </location>
</feature>
<feature type="compositionally biased region" description="Basic and acidic residues" evidence="5">
    <location>
        <begin position="208"/>
        <end position="231"/>
    </location>
</feature>
<feature type="compositionally biased region" description="Basic and acidic residues" evidence="5">
    <location>
        <begin position="242"/>
        <end position="252"/>
    </location>
</feature>
<feature type="compositionally biased region" description="Polar residues" evidence="5">
    <location>
        <begin position="303"/>
        <end position="312"/>
    </location>
</feature>
<feature type="compositionally biased region" description="Basic and acidic residues" evidence="5">
    <location>
        <begin position="338"/>
        <end position="352"/>
    </location>
</feature>
<feature type="compositionally biased region" description="Basic and acidic residues" evidence="5">
    <location>
        <begin position="410"/>
        <end position="419"/>
    </location>
</feature>
<feature type="compositionally biased region" description="Polar residues" evidence="5">
    <location>
        <begin position="427"/>
        <end position="436"/>
    </location>
</feature>
<feature type="compositionally biased region" description="Pro residues" evidence="5">
    <location>
        <begin position="586"/>
        <end position="596"/>
    </location>
</feature>
<feature type="compositionally biased region" description="Pro residues" evidence="5">
    <location>
        <begin position="637"/>
        <end position="646"/>
    </location>
</feature>
<feature type="compositionally biased region" description="Pro residues" evidence="5">
    <location>
        <begin position="673"/>
        <end position="691"/>
    </location>
</feature>
<feature type="modified residue" description="Phosphoserine" evidence="3">
    <location>
        <position position="34"/>
    </location>
</feature>
<feature type="modified residue" description="Phosphoserine" evidence="2">
    <location>
        <position position="115"/>
    </location>
</feature>
<feature type="modified residue" description="Phosphoserine" evidence="10">
    <location>
        <position position="145"/>
    </location>
</feature>
<feature type="modified residue" description="Phosphoserine" evidence="10">
    <location>
        <position position="262"/>
    </location>
</feature>
<feature type="modified residue" description="Phosphothreonine" evidence="2">
    <location>
        <position position="354"/>
    </location>
</feature>
<feature type="modified residue" description="Phosphoserine" evidence="10">
    <location>
        <position position="360"/>
    </location>
</feature>
<feature type="modified residue" description="Phosphoserine" evidence="10">
    <location>
        <position position="370"/>
    </location>
</feature>
<feature type="modified residue" description="Phosphoserine" evidence="2">
    <location>
        <position position="473"/>
    </location>
</feature>
<proteinExistence type="evidence at protein level"/>
<accession>Q8K3X0</accession>